<sequence length="256" mass="27130">MKIITCYKCVPDEQDIAVNNADGSLDFSKADAKISQYDLNAIEAACQLKQQAAEGQVTALSVGGKALTNAKGRKDVLSRGPDELIVVIDDQFEQALPQQTASALAAAAQKAGFDLILCGDGSSDLYAQQVGLLVGEILNIPAVNGVSKIISLTADTLTVERELEDETETLSIPLPAVVAVSTDINSPQIPSMKAILGAAKKPVQVWSAADIGFNAEAAWSEQQVAAPKQRERQRIVIEGDGEEQIAAFAENLRKVI</sequence>
<gene>
    <name evidence="1" type="primary">fixA</name>
    <name type="ordered locus">EcSMS35_0043</name>
</gene>
<protein>
    <recommendedName>
        <fullName evidence="1">Protein FixA</fullName>
    </recommendedName>
</protein>
<keyword id="KW-0249">Electron transport</keyword>
<keyword id="KW-0813">Transport</keyword>
<feature type="chain" id="PRO_1000136320" description="Protein FixA">
    <location>
        <begin position="1"/>
        <end position="256"/>
    </location>
</feature>
<name>FIXA_ECOSM</name>
<evidence type="ECO:0000255" key="1">
    <source>
        <dbReference type="HAMAP-Rule" id="MF_01055"/>
    </source>
</evidence>
<organism>
    <name type="scientific">Escherichia coli (strain SMS-3-5 / SECEC)</name>
    <dbReference type="NCBI Taxonomy" id="439855"/>
    <lineage>
        <taxon>Bacteria</taxon>
        <taxon>Pseudomonadati</taxon>
        <taxon>Pseudomonadota</taxon>
        <taxon>Gammaproteobacteria</taxon>
        <taxon>Enterobacterales</taxon>
        <taxon>Enterobacteriaceae</taxon>
        <taxon>Escherichia</taxon>
    </lineage>
</organism>
<accession>B1LFX5</accession>
<comment type="function">
    <text evidence="1">Required for anaerobic carnitine reduction. May bring reductant to CaiA.</text>
</comment>
<comment type="pathway">
    <text evidence="1">Amine and polyamine metabolism; carnitine metabolism.</text>
</comment>
<comment type="subunit">
    <text evidence="1">Heterodimer of FixA and FixB.</text>
</comment>
<comment type="similarity">
    <text evidence="1">Belongs to the ETF beta-subunit/FixA family.</text>
</comment>
<reference key="1">
    <citation type="journal article" date="2008" name="J. Bacteriol.">
        <title>Insights into the environmental resistance gene pool from the genome sequence of the multidrug-resistant environmental isolate Escherichia coli SMS-3-5.</title>
        <authorList>
            <person name="Fricke W.F."/>
            <person name="Wright M.S."/>
            <person name="Lindell A.H."/>
            <person name="Harkins D.M."/>
            <person name="Baker-Austin C."/>
            <person name="Ravel J."/>
            <person name="Stepanauskas R."/>
        </authorList>
    </citation>
    <scope>NUCLEOTIDE SEQUENCE [LARGE SCALE GENOMIC DNA]</scope>
    <source>
        <strain>SMS-3-5 / SECEC</strain>
    </source>
</reference>
<proteinExistence type="inferred from homology"/>
<dbReference type="EMBL" id="CP000970">
    <property type="protein sequence ID" value="ACB20163.1"/>
    <property type="molecule type" value="Genomic_DNA"/>
</dbReference>
<dbReference type="RefSeq" id="WP_000692225.1">
    <property type="nucleotide sequence ID" value="NC_010498.1"/>
</dbReference>
<dbReference type="SMR" id="B1LFX5"/>
<dbReference type="KEGG" id="ecm:EcSMS35_0043"/>
<dbReference type="HOGENOM" id="CLU_060196_2_2_6"/>
<dbReference type="UniPathway" id="UPA00117"/>
<dbReference type="Proteomes" id="UP000007011">
    <property type="component" value="Chromosome"/>
</dbReference>
<dbReference type="GO" id="GO:0009055">
    <property type="term" value="F:electron transfer activity"/>
    <property type="evidence" value="ECO:0007669"/>
    <property type="project" value="InterPro"/>
</dbReference>
<dbReference type="GO" id="GO:0009437">
    <property type="term" value="P:carnitine metabolic process"/>
    <property type="evidence" value="ECO:0007669"/>
    <property type="project" value="UniProtKB-UniRule"/>
</dbReference>
<dbReference type="CDD" id="cd01714">
    <property type="entry name" value="ETF_beta"/>
    <property type="match status" value="1"/>
</dbReference>
<dbReference type="FunFam" id="3.40.50.620:FF:000072">
    <property type="entry name" value="Protein FixA homolog"/>
    <property type="match status" value="1"/>
</dbReference>
<dbReference type="Gene3D" id="3.40.50.620">
    <property type="entry name" value="HUPs"/>
    <property type="match status" value="1"/>
</dbReference>
<dbReference type="HAMAP" id="MF_01055">
    <property type="entry name" value="FixA"/>
    <property type="match status" value="1"/>
</dbReference>
<dbReference type="InterPro" id="IPR000049">
    <property type="entry name" value="ET-Flavoprotein_bsu_CS"/>
</dbReference>
<dbReference type="InterPro" id="IPR014730">
    <property type="entry name" value="ETF_a/b_N"/>
</dbReference>
<dbReference type="InterPro" id="IPR012255">
    <property type="entry name" value="ETF_b"/>
</dbReference>
<dbReference type="InterPro" id="IPR033948">
    <property type="entry name" value="ETF_beta_N"/>
</dbReference>
<dbReference type="InterPro" id="IPR023463">
    <property type="entry name" value="FixA"/>
</dbReference>
<dbReference type="InterPro" id="IPR014729">
    <property type="entry name" value="Rossmann-like_a/b/a_fold"/>
</dbReference>
<dbReference type="NCBIfam" id="NF002888">
    <property type="entry name" value="PRK03359.1"/>
    <property type="match status" value="1"/>
</dbReference>
<dbReference type="NCBIfam" id="NF008998">
    <property type="entry name" value="PRK12342.1"/>
    <property type="match status" value="1"/>
</dbReference>
<dbReference type="PANTHER" id="PTHR21294">
    <property type="entry name" value="ELECTRON TRANSFER FLAVOPROTEIN BETA-SUBUNIT"/>
    <property type="match status" value="1"/>
</dbReference>
<dbReference type="PANTHER" id="PTHR21294:SF17">
    <property type="entry name" value="PROTEIN FIXA"/>
    <property type="match status" value="1"/>
</dbReference>
<dbReference type="Pfam" id="PF01012">
    <property type="entry name" value="ETF"/>
    <property type="match status" value="1"/>
</dbReference>
<dbReference type="PIRSF" id="PIRSF000090">
    <property type="entry name" value="Beta-ETF"/>
    <property type="match status" value="1"/>
</dbReference>
<dbReference type="SMART" id="SM00893">
    <property type="entry name" value="ETF"/>
    <property type="match status" value="1"/>
</dbReference>
<dbReference type="SUPFAM" id="SSF52402">
    <property type="entry name" value="Adenine nucleotide alpha hydrolases-like"/>
    <property type="match status" value="1"/>
</dbReference>
<dbReference type="PROSITE" id="PS01065">
    <property type="entry name" value="ETF_BETA"/>
    <property type="match status" value="1"/>
</dbReference>